<protein>
    <recommendedName>
        <fullName evidence="1">Exodeoxyribonuclease 7 small subunit</fullName>
        <ecNumber evidence="1">3.1.11.6</ecNumber>
    </recommendedName>
    <alternativeName>
        <fullName evidence="1">Exodeoxyribonuclease VII small subunit</fullName>
        <shortName evidence="1">Exonuclease VII small subunit</shortName>
    </alternativeName>
</protein>
<dbReference type="EC" id="3.1.11.6" evidence="1"/>
<dbReference type="EMBL" id="AL939122">
    <property type="protein sequence ID" value="CAC05900.1"/>
    <property type="molecule type" value="Genomic_DNA"/>
</dbReference>
<dbReference type="RefSeq" id="NP_629207.1">
    <property type="nucleotide sequence ID" value="NC_003888.3"/>
</dbReference>
<dbReference type="RefSeq" id="WP_011030026.1">
    <property type="nucleotide sequence ID" value="NZ_VNID01000008.1"/>
</dbReference>
<dbReference type="SMR" id="Q9FBM4"/>
<dbReference type="FunCoup" id="Q9FBM4">
    <property type="interactions" value="2"/>
</dbReference>
<dbReference type="STRING" id="100226.gene:17762704"/>
<dbReference type="PaxDb" id="100226-SCO5055"/>
<dbReference type="KEGG" id="sco:SCO5055"/>
<dbReference type="eggNOG" id="COG1722">
    <property type="taxonomic scope" value="Bacteria"/>
</dbReference>
<dbReference type="HOGENOM" id="CLU_145918_0_2_11"/>
<dbReference type="InParanoid" id="Q9FBM4"/>
<dbReference type="OrthoDB" id="5244334at2"/>
<dbReference type="PhylomeDB" id="Q9FBM4"/>
<dbReference type="Proteomes" id="UP000001973">
    <property type="component" value="Chromosome"/>
</dbReference>
<dbReference type="GO" id="GO:0005829">
    <property type="term" value="C:cytosol"/>
    <property type="evidence" value="ECO:0000318"/>
    <property type="project" value="GO_Central"/>
</dbReference>
<dbReference type="GO" id="GO:0009318">
    <property type="term" value="C:exodeoxyribonuclease VII complex"/>
    <property type="evidence" value="ECO:0007669"/>
    <property type="project" value="InterPro"/>
</dbReference>
<dbReference type="GO" id="GO:0008855">
    <property type="term" value="F:exodeoxyribonuclease VII activity"/>
    <property type="evidence" value="ECO:0000318"/>
    <property type="project" value="GO_Central"/>
</dbReference>
<dbReference type="GO" id="GO:0006308">
    <property type="term" value="P:DNA catabolic process"/>
    <property type="evidence" value="ECO:0007669"/>
    <property type="project" value="UniProtKB-UniRule"/>
</dbReference>
<dbReference type="Gene3D" id="1.10.287.1040">
    <property type="entry name" value="Exonuclease VII, small subunit"/>
    <property type="match status" value="1"/>
</dbReference>
<dbReference type="HAMAP" id="MF_00337">
    <property type="entry name" value="Exonuc_7_S"/>
    <property type="match status" value="1"/>
</dbReference>
<dbReference type="InterPro" id="IPR003761">
    <property type="entry name" value="Exonuc_VII_S"/>
</dbReference>
<dbReference type="InterPro" id="IPR037004">
    <property type="entry name" value="Exonuc_VII_ssu_sf"/>
</dbReference>
<dbReference type="NCBIfam" id="NF002139">
    <property type="entry name" value="PRK00977.1-3"/>
    <property type="match status" value="1"/>
</dbReference>
<dbReference type="NCBIfam" id="TIGR01280">
    <property type="entry name" value="xseB"/>
    <property type="match status" value="1"/>
</dbReference>
<dbReference type="PANTHER" id="PTHR34137">
    <property type="entry name" value="EXODEOXYRIBONUCLEASE 7 SMALL SUBUNIT"/>
    <property type="match status" value="1"/>
</dbReference>
<dbReference type="PANTHER" id="PTHR34137:SF1">
    <property type="entry name" value="EXODEOXYRIBONUCLEASE 7 SMALL SUBUNIT"/>
    <property type="match status" value="1"/>
</dbReference>
<dbReference type="Pfam" id="PF02609">
    <property type="entry name" value="Exonuc_VII_S"/>
    <property type="match status" value="1"/>
</dbReference>
<dbReference type="PIRSF" id="PIRSF006488">
    <property type="entry name" value="Exonuc_VII_S"/>
    <property type="match status" value="1"/>
</dbReference>
<dbReference type="SUPFAM" id="SSF116842">
    <property type="entry name" value="XseB-like"/>
    <property type="match status" value="1"/>
</dbReference>
<accession>Q9FBM4</accession>
<name>EX7S_STRCO</name>
<organism>
    <name type="scientific">Streptomyces coelicolor (strain ATCC BAA-471 / A3(2) / M145)</name>
    <dbReference type="NCBI Taxonomy" id="100226"/>
    <lineage>
        <taxon>Bacteria</taxon>
        <taxon>Bacillati</taxon>
        <taxon>Actinomycetota</taxon>
        <taxon>Actinomycetes</taxon>
        <taxon>Kitasatosporales</taxon>
        <taxon>Streptomycetaceae</taxon>
        <taxon>Streptomyces</taxon>
        <taxon>Streptomyces albidoflavus group</taxon>
    </lineage>
</organism>
<proteinExistence type="inferred from homology"/>
<evidence type="ECO:0000255" key="1">
    <source>
        <dbReference type="HAMAP-Rule" id="MF_00337"/>
    </source>
</evidence>
<evidence type="ECO:0000256" key="2">
    <source>
        <dbReference type="SAM" id="MobiDB-lite"/>
    </source>
</evidence>
<evidence type="ECO:0000305" key="3"/>
<sequence length="88" mass="9376">MTSEVEQPTAMSEALGYEQARDELIEVVRRLEAGGTTLEESLALWERGEELAEVCRRRLDGARARLDAALAEEADPEDGASGADGGGA</sequence>
<keyword id="KW-0963">Cytoplasm</keyword>
<keyword id="KW-0269">Exonuclease</keyword>
<keyword id="KW-0378">Hydrolase</keyword>
<keyword id="KW-0540">Nuclease</keyword>
<keyword id="KW-1185">Reference proteome</keyword>
<feature type="chain" id="PRO_0000207014" description="Exodeoxyribonuclease 7 small subunit">
    <location>
        <begin position="1"/>
        <end position="88"/>
    </location>
</feature>
<feature type="region of interest" description="Disordered" evidence="2">
    <location>
        <begin position="69"/>
        <end position="88"/>
    </location>
</feature>
<comment type="function">
    <text evidence="1">Bidirectionally degrades single-stranded DNA into large acid-insoluble oligonucleotides, which are then degraded further into small acid-soluble oligonucleotides.</text>
</comment>
<comment type="catalytic activity">
    <reaction evidence="1">
        <text>Exonucleolytic cleavage in either 5'- to 3'- or 3'- to 5'-direction to yield nucleoside 5'-phosphates.</text>
        <dbReference type="EC" id="3.1.11.6"/>
    </reaction>
</comment>
<comment type="subunit">
    <text evidence="1">Heterooligomer composed of large and small subunits.</text>
</comment>
<comment type="subcellular location">
    <subcellularLocation>
        <location evidence="1">Cytoplasm</location>
    </subcellularLocation>
</comment>
<comment type="similarity">
    <text evidence="1 3">Belongs to the XseB family.</text>
</comment>
<gene>
    <name evidence="1" type="primary">xseB</name>
    <name type="ordered locus">SCO5055</name>
    <name type="ORF">SCK7.28c</name>
</gene>
<reference key="1">
    <citation type="journal article" date="2002" name="Nature">
        <title>Complete genome sequence of the model actinomycete Streptomyces coelicolor A3(2).</title>
        <authorList>
            <person name="Bentley S.D."/>
            <person name="Chater K.F."/>
            <person name="Cerdeno-Tarraga A.-M."/>
            <person name="Challis G.L."/>
            <person name="Thomson N.R."/>
            <person name="James K.D."/>
            <person name="Harris D.E."/>
            <person name="Quail M.A."/>
            <person name="Kieser H."/>
            <person name="Harper D."/>
            <person name="Bateman A."/>
            <person name="Brown S."/>
            <person name="Chandra G."/>
            <person name="Chen C.W."/>
            <person name="Collins M."/>
            <person name="Cronin A."/>
            <person name="Fraser A."/>
            <person name="Goble A."/>
            <person name="Hidalgo J."/>
            <person name="Hornsby T."/>
            <person name="Howarth S."/>
            <person name="Huang C.-H."/>
            <person name="Kieser T."/>
            <person name="Larke L."/>
            <person name="Murphy L.D."/>
            <person name="Oliver K."/>
            <person name="O'Neil S."/>
            <person name="Rabbinowitsch E."/>
            <person name="Rajandream M.A."/>
            <person name="Rutherford K.M."/>
            <person name="Rutter S."/>
            <person name="Seeger K."/>
            <person name="Saunders D."/>
            <person name="Sharp S."/>
            <person name="Squares R."/>
            <person name="Squares S."/>
            <person name="Taylor K."/>
            <person name="Warren T."/>
            <person name="Wietzorrek A."/>
            <person name="Woodward J.R."/>
            <person name="Barrell B.G."/>
            <person name="Parkhill J."/>
            <person name="Hopwood D.A."/>
        </authorList>
    </citation>
    <scope>NUCLEOTIDE SEQUENCE [LARGE SCALE GENOMIC DNA]</scope>
    <source>
        <strain>ATCC BAA-471 / A3(2) / M145</strain>
    </source>
</reference>